<accession>A7KAJ7</accession>
<organism>
    <name type="scientific">Pichia angusta</name>
    <name type="common">Yeast</name>
    <name type="synonym">Hansenula polymorpha</name>
    <dbReference type="NCBI Taxonomy" id="870730"/>
    <lineage>
        <taxon>Eukaryota</taxon>
        <taxon>Fungi</taxon>
        <taxon>Dikarya</taxon>
        <taxon>Ascomycota</taxon>
        <taxon>Saccharomycotina</taxon>
        <taxon>Pichiomycetes</taxon>
        <taxon>Pichiales</taxon>
        <taxon>Pichiaceae</taxon>
        <taxon>Ogataea</taxon>
    </lineage>
</organism>
<proteinExistence type="inferred from homology"/>
<name>ATG12_PICAN</name>
<comment type="function">
    <text evidence="1 2">Ubiquitin-like protein involved in cytoplasm to vacuole transport (Cvt), autophagy vesicles formation, mitophagy, and nucleophagy. Conjugation with ATG5 through a ubiquitin-like conjugating system involving also ATG7 as an E1-like activating enzyme and ATG10 as an E2-like conjugating enzyme, is essential for its function. The ATG12-ATG5 conjugate functions as an E3-like enzyme which is required for lipidation of ATG8 and ATG8 association to the vesicle membranes (By similarity).</text>
</comment>
<comment type="subunit">
    <text evidence="1">Forms a conjugate with ATG5.</text>
</comment>
<comment type="subcellular location">
    <subcellularLocation>
        <location evidence="1">Preautophagosomal structure membrane</location>
        <topology evidence="1">Peripheral membrane protein</topology>
    </subcellularLocation>
</comment>
<comment type="similarity">
    <text evidence="3">Belongs to the ATG12 family.</text>
</comment>
<keyword id="KW-0072">Autophagy</keyword>
<keyword id="KW-1017">Isopeptide bond</keyword>
<keyword id="KW-0472">Membrane</keyword>
<keyword id="KW-0653">Protein transport</keyword>
<keyword id="KW-0813">Transport</keyword>
<keyword id="KW-0833">Ubl conjugation pathway</keyword>
<reference key="1">
    <citation type="journal article" date="2007" name="Autophagy">
        <title>ATG genes involved in non-selective autophagy are conserved from yeast to man, but the selective Cvt and pexophagy pathways also require organism-specific genes.</title>
        <authorList>
            <person name="Meijer W.H."/>
            <person name="van der Klei I.J."/>
            <person name="Veenhuis M."/>
            <person name="Kiel J.A.K.W."/>
        </authorList>
    </citation>
    <scope>NUCLEOTIDE SEQUENCE [GENOMIC DNA]</scope>
    <scope>FUNCTION</scope>
    <source>
        <strain>ATCC 34438 / CBS 4732 / DSM 70277 / JCM 3621 / NBRC 1476 / NRRL Y-5445</strain>
    </source>
</reference>
<dbReference type="EMBL" id="EF107719">
    <property type="protein sequence ID" value="ABO31057.1"/>
    <property type="molecule type" value="Genomic_DNA"/>
</dbReference>
<dbReference type="SMR" id="A7KAJ7"/>
<dbReference type="PhylomeDB" id="A7KAJ7"/>
<dbReference type="GO" id="GO:0034274">
    <property type="term" value="C:Atg12-Atg5-Atg16 complex"/>
    <property type="evidence" value="ECO:0007669"/>
    <property type="project" value="TreeGrafter"/>
</dbReference>
<dbReference type="GO" id="GO:0000421">
    <property type="term" value="C:autophagosome membrane"/>
    <property type="evidence" value="ECO:0007669"/>
    <property type="project" value="TreeGrafter"/>
</dbReference>
<dbReference type="GO" id="GO:0034045">
    <property type="term" value="C:phagophore assembly site membrane"/>
    <property type="evidence" value="ECO:0007669"/>
    <property type="project" value="UniProtKB-SubCell"/>
</dbReference>
<dbReference type="GO" id="GO:0019776">
    <property type="term" value="F:Atg8-family ligase activity"/>
    <property type="evidence" value="ECO:0007669"/>
    <property type="project" value="TreeGrafter"/>
</dbReference>
<dbReference type="GO" id="GO:0000045">
    <property type="term" value="P:autophagosome assembly"/>
    <property type="evidence" value="ECO:0007669"/>
    <property type="project" value="InterPro"/>
</dbReference>
<dbReference type="GO" id="GO:0097352">
    <property type="term" value="P:autophagosome maturation"/>
    <property type="evidence" value="ECO:0007669"/>
    <property type="project" value="TreeGrafter"/>
</dbReference>
<dbReference type="GO" id="GO:0000422">
    <property type="term" value="P:autophagy of mitochondrion"/>
    <property type="evidence" value="ECO:0007669"/>
    <property type="project" value="TreeGrafter"/>
</dbReference>
<dbReference type="GO" id="GO:0061723">
    <property type="term" value="P:glycophagy"/>
    <property type="evidence" value="ECO:0007669"/>
    <property type="project" value="TreeGrafter"/>
</dbReference>
<dbReference type="GO" id="GO:0034727">
    <property type="term" value="P:piecemeal microautophagy of the nucleus"/>
    <property type="evidence" value="ECO:0007669"/>
    <property type="project" value="TreeGrafter"/>
</dbReference>
<dbReference type="GO" id="GO:0015031">
    <property type="term" value="P:protein transport"/>
    <property type="evidence" value="ECO:0007669"/>
    <property type="project" value="UniProtKB-KW"/>
</dbReference>
<dbReference type="CDD" id="cd01612">
    <property type="entry name" value="Ubl_ATG12"/>
    <property type="match status" value="1"/>
</dbReference>
<dbReference type="Gene3D" id="3.10.20.90">
    <property type="entry name" value="Phosphatidylinositol 3-kinase Catalytic Subunit, Chain A, domain 1"/>
    <property type="match status" value="1"/>
</dbReference>
<dbReference type="InterPro" id="IPR007242">
    <property type="entry name" value="Atg12"/>
</dbReference>
<dbReference type="InterPro" id="IPR029071">
    <property type="entry name" value="Ubiquitin-like_domsf"/>
</dbReference>
<dbReference type="PANTHER" id="PTHR13385">
    <property type="entry name" value="AUTOPHAGY PROTEIN 12"/>
    <property type="match status" value="1"/>
</dbReference>
<dbReference type="PANTHER" id="PTHR13385:SF0">
    <property type="entry name" value="UBIQUITIN-LIKE PROTEIN ATG12"/>
    <property type="match status" value="1"/>
</dbReference>
<dbReference type="Pfam" id="PF04110">
    <property type="entry name" value="APG12"/>
    <property type="match status" value="1"/>
</dbReference>
<dbReference type="SUPFAM" id="SSF54236">
    <property type="entry name" value="Ubiquitin-like"/>
    <property type="match status" value="1"/>
</dbReference>
<evidence type="ECO:0000250" key="1"/>
<evidence type="ECO:0000269" key="2">
    <source>
    </source>
</evidence>
<evidence type="ECO:0000305" key="3"/>
<feature type="chain" id="PRO_0000317938" description="Ubiquitin-like protein ATG12">
    <location>
        <begin position="1"/>
        <end position="167"/>
    </location>
</feature>
<feature type="cross-link" description="Glycyl lysine isopeptide (Gly-Lys) (interchain with K-135 in ATG5)" evidence="1">
    <location>
        <position position="167"/>
    </location>
</feature>
<protein>
    <recommendedName>
        <fullName>Ubiquitin-like protein ATG12</fullName>
    </recommendedName>
    <alternativeName>
        <fullName>Autophagy-related protein 12</fullName>
    </alternativeName>
</protein>
<gene>
    <name type="primary">ATG12</name>
</gene>
<sequence length="167" mass="18587">MSDKDLASSLMELNIKVGTTDIPQTIAEEQNQVTDTKEEVLDDETTIKNDPQKTKITLNQSMMLSKLPAKTTSAVLSVSKPTESKIQIRFKSIGSVDQVSPAVFKISKSSKFSSILRFLELKLGKKVYCYLNNSVSPNPDEELENLYNIFRVGDELIVSYCNIVAFG</sequence>